<sequence>MGVISDAYRLKYTFGVDFGTSYVKYGPITLNEPKMVQTRGLFLRDLPESVKMRIPPDVLARGLVVGDEEVRKYLSSVRDVQRNLKYPLKDGVARRDDEEAWRVLKELARYTLAQFPVSDPEFAGWLVAVALSALAPDYMYKAIFDIYDELASEFKIYAVTILPQPLAVAIAENAVNCVIVEGGHGNIQVAPISFALIREGLVALNRGGAEANAITREILKDIGYSDIAREEYAVEVVKRAVGLVPRRLKEAIRAAKSDPDRFVTKVRLSPVVEVEIPREYAWTRFLIGEIVFDPNHEEIKSYIEQSRLRIENAVIGDVTLYGEMDVASAIITSLRNVSVEIQERVASQIILSGGAFSWRVPPGMEDVAADSVTRVKIALEEKSPALASKVEVRLVSEPQYSVWRGAVIYGYALPLSLEWSDTTREGWRFPRR</sequence>
<proteinExistence type="evidence at protein level"/>
<reference key="1">
    <citation type="submission" date="2007-02" db="EMBL/GenBank/DDBJ databases">
        <title>Complete sequence of Pyrobaculum calidifontis JCM 11548.</title>
        <authorList>
            <consortium name="US DOE Joint Genome Institute"/>
            <person name="Copeland A."/>
            <person name="Lucas S."/>
            <person name="Lapidus A."/>
            <person name="Barry K."/>
            <person name="Glavina del Rio T."/>
            <person name="Dalin E."/>
            <person name="Tice H."/>
            <person name="Pitluck S."/>
            <person name="Chain P."/>
            <person name="Malfatti S."/>
            <person name="Shin M."/>
            <person name="Vergez L."/>
            <person name="Schmutz J."/>
            <person name="Larimer F."/>
            <person name="Land M."/>
            <person name="Hauser L."/>
            <person name="Kyrpides N."/>
            <person name="Mikhailova N."/>
            <person name="Cozen A.E."/>
            <person name="Fitz-Gibbon S.T."/>
            <person name="House C.H."/>
            <person name="Saltikov C."/>
            <person name="Lowe T.M."/>
            <person name="Richardson P."/>
        </authorList>
    </citation>
    <scope>NUCLEOTIDE SEQUENCE [LARGE SCALE GENOMIC DNA]</scope>
    <source>
        <strain>DSM 21063 / JCM 11548 / VA1</strain>
    </source>
</reference>
<reference key="2">
    <citation type="journal article" date="2011" name="Mol. Microbiol.">
        <title>An actin-based cytoskeleton in archaea.</title>
        <authorList>
            <person name="Ettema T.J."/>
            <person name="Lindaas A.C."/>
            <person name="Bernander R."/>
        </authorList>
    </citation>
    <scope>FUNCTION</scope>
    <scope>CATALYTIC ACTIVITY</scope>
    <scope>ACTIVITY REGULATION</scope>
    <scope>SUBCELLULAR LOCATION</scope>
</reference>
<reference key="3">
    <citation type="journal article" date="2015" name="Proc. Natl. Acad. Sci. U.S.A.">
        <title>Archaeal actin from a hyperthermophile forms a single-stranded filament.</title>
        <authorList>
            <person name="Braun T."/>
            <person name="Orlova A."/>
            <person name="Valegaard K."/>
            <person name="Lindaas A.C."/>
            <person name="Schroeder G.F."/>
            <person name="Egelman E.H."/>
        </authorList>
    </citation>
    <scope>SUBUNIT</scope>
</reference>
<reference evidence="13" key="4">
    <citation type="journal article" date="2014" name="Acta Crystallogr. D">
        <title>Structure of crenactin, an archaeal actin homologue active at 90C.</title>
        <authorList>
            <person name="Lindas A.C."/>
            <person name="Chruszcz M."/>
            <person name="Bernander R."/>
            <person name="Valegard K."/>
        </authorList>
    </citation>
    <scope>X-RAY CRYSTALLOGRAPHY (3.34 ANGSTROMS) IN COMPLEX WITH ADP</scope>
    <scope>SUBUNIT</scope>
</reference>
<reference evidence="14" key="5">
    <citation type="journal article" date="2014" name="FEBS Lett.">
        <title>Crenactin from Pyrobaculum calidifontis is closely related to actin in structure and forms steep helical filaments.</title>
        <authorList>
            <person name="Izore T."/>
            <person name="Duman R."/>
            <person name="Kureisaite-Ciziene D."/>
            <person name="Lowe J."/>
        </authorList>
    </citation>
    <scope>X-RAY CRYSTALLOGRAPHY (3.20 ANGSTROMS) IN COMPLEX WITH ADP</scope>
    <scope>SUBUNIT</scope>
</reference>
<reference evidence="15" key="6">
    <citation type="journal article" date="2016" name="Elife">
        <title>Crenactin forms actin-like double helical filaments regulated by arcadin-2.</title>
        <authorList>
            <person name="Izore T."/>
            <person name="Kureisaite-Ciziene D."/>
            <person name="McLaughlin S.H."/>
            <person name="Lowe J."/>
        </authorList>
    </citation>
    <scope>X-RAY CRYSTALLOGRAPHY (1.60 ANGSTROMS) IN COMPLEX WITH ADP AND ARCADIN-2 C-TERMINUS</scope>
    <scope>ACTIVITY REGULATION</scope>
    <scope>SUBUNIT</scope>
    <scope>INTERACTION WITH ARCADIN-1 AND ARCADIN-2</scope>
</reference>
<comment type="function">
    <text evidence="1">Forms the backbone of an actin-like archaeal cytoskeleton, which is involved in cell shape determination. Has ATPase activity. Shows highest activity towards ATP or GTP as nucleotide, and only residual activity on UTP, CTP and dNTPs.</text>
</comment>
<comment type="catalytic activity">
    <reaction evidence="1">
        <text>ATP + H2O = ADP + phosphate + H(+)</text>
        <dbReference type="Rhea" id="RHEA:13065"/>
        <dbReference type="ChEBI" id="CHEBI:15377"/>
        <dbReference type="ChEBI" id="CHEBI:15378"/>
        <dbReference type="ChEBI" id="CHEBI:30616"/>
        <dbReference type="ChEBI" id="CHEBI:43474"/>
        <dbReference type="ChEBI" id="CHEBI:456216"/>
    </reaction>
</comment>
<comment type="activity regulation">
    <text evidence="1 5">Crenactin polymerization is inhibited by interaction with arcadin-2 (PubMed:27852434). Also significantly inhibited by elevated antibiotic A22 concentrations (PubMed:21414041).</text>
</comment>
<comment type="subunit">
    <text evidence="2 3 4 5">Monomer. The crenactin monomers polymerize into right-handed helical filaments, with 8 subunits per complete turn of the helix (PubMed:24486010, PubMed:24531483). Forms single-stranded filaments under high salt concentrations and double-stranded filaments under low salt concentrations (PubMed:26124094, PubMed:27852434). Interacts with arcadin-1 and arcadin-2 (PubMed:27852434).</text>
</comment>
<comment type="subcellular location">
    <subcellularLocation>
        <location evidence="7">Cytoplasm</location>
        <location evidence="7">Cytoskeleton</location>
    </subcellularLocation>
    <text evidence="1">Forms cell-spanning helical structures.</text>
</comment>
<comment type="miscellaneous">
    <text evidence="8">Belongs to a conserved five-gene operon within Thermoproteales denoted Arcade (actin-related cytoskeleton in Archaea involved in shape determination).</text>
</comment>
<comment type="similarity">
    <text evidence="7">Belongs to the actin family.</text>
</comment>
<organism>
    <name type="scientific">Pyrobaculum calidifontis (strain DSM 21063 / JCM 11548 / VA1)</name>
    <dbReference type="NCBI Taxonomy" id="410359"/>
    <lineage>
        <taxon>Archaea</taxon>
        <taxon>Thermoproteota</taxon>
        <taxon>Thermoprotei</taxon>
        <taxon>Thermoproteales</taxon>
        <taxon>Thermoproteaceae</taxon>
        <taxon>Pyrobaculum</taxon>
    </lineage>
</organism>
<feature type="chain" id="PRO_0000439071" description="Crenactin">
    <location>
        <begin position="1"/>
        <end position="432"/>
    </location>
</feature>
<feature type="binding site" evidence="9 10 11">
    <location>
        <begin position="20"/>
        <end position="24"/>
    </location>
    <ligand>
        <name>ATP</name>
        <dbReference type="ChEBI" id="CHEBI:30616"/>
    </ligand>
</feature>
<feature type="binding site" evidence="9 10 11">
    <location>
        <begin position="182"/>
        <end position="184"/>
    </location>
    <ligand>
        <name>ATP</name>
        <dbReference type="ChEBI" id="CHEBI:30616"/>
    </ligand>
</feature>
<feature type="binding site" evidence="9 10 11">
    <location>
        <begin position="235"/>
        <end position="239"/>
    </location>
    <ligand>
        <name>ATP</name>
        <dbReference type="ChEBI" id="CHEBI:30616"/>
    </ligand>
</feature>
<feature type="binding site" evidence="9 10 11">
    <location>
        <begin position="354"/>
        <end position="358"/>
    </location>
    <ligand>
        <name>ATP</name>
        <dbReference type="ChEBI" id="CHEBI:30616"/>
    </ligand>
</feature>
<feature type="binding site" evidence="11">
    <location>
        <position position="399"/>
    </location>
    <ligand>
        <name>ATP</name>
        <dbReference type="ChEBI" id="CHEBI:30616"/>
    </ligand>
</feature>
<feature type="strand" evidence="16">
    <location>
        <begin position="3"/>
        <end position="5"/>
    </location>
</feature>
<feature type="helix" evidence="18">
    <location>
        <begin position="6"/>
        <end position="12"/>
    </location>
</feature>
<feature type="strand" evidence="18">
    <location>
        <begin position="13"/>
        <end position="18"/>
    </location>
</feature>
<feature type="strand" evidence="18">
    <location>
        <begin position="20"/>
        <end position="27"/>
    </location>
</feature>
<feature type="strand" evidence="16">
    <location>
        <begin position="30"/>
        <end position="32"/>
    </location>
</feature>
<feature type="strand" evidence="18">
    <location>
        <begin position="34"/>
        <end position="38"/>
    </location>
</feature>
<feature type="strand" evidence="18">
    <location>
        <begin position="40"/>
        <end position="42"/>
    </location>
</feature>
<feature type="helix" evidence="18">
    <location>
        <begin position="48"/>
        <end position="51"/>
    </location>
</feature>
<feature type="strand" evidence="17">
    <location>
        <begin position="52"/>
        <end position="54"/>
    </location>
</feature>
<feature type="helix" evidence="18">
    <location>
        <begin position="56"/>
        <end position="61"/>
    </location>
</feature>
<feature type="helix" evidence="18">
    <location>
        <begin position="67"/>
        <end position="74"/>
    </location>
</feature>
<feature type="helix" evidence="18">
    <location>
        <begin position="80"/>
        <end position="83"/>
    </location>
</feature>
<feature type="turn" evidence="18">
    <location>
        <begin position="87"/>
        <end position="90"/>
    </location>
</feature>
<feature type="helix" evidence="18">
    <location>
        <begin position="98"/>
        <end position="113"/>
    </location>
</feature>
<feature type="strand" evidence="16">
    <location>
        <begin position="119"/>
        <end position="121"/>
    </location>
</feature>
<feature type="strand" evidence="18">
    <location>
        <begin position="125"/>
        <end position="131"/>
    </location>
</feature>
<feature type="helix" evidence="18">
    <location>
        <begin position="137"/>
        <end position="150"/>
    </location>
</feature>
<feature type="turn" evidence="18">
    <location>
        <begin position="151"/>
        <end position="153"/>
    </location>
</feature>
<feature type="strand" evidence="18">
    <location>
        <begin position="156"/>
        <end position="163"/>
    </location>
</feature>
<feature type="helix" evidence="18">
    <location>
        <begin position="164"/>
        <end position="171"/>
    </location>
</feature>
<feature type="strand" evidence="18">
    <location>
        <begin position="175"/>
        <end position="182"/>
    </location>
</feature>
<feature type="strand" evidence="18">
    <location>
        <begin position="187"/>
        <end position="196"/>
    </location>
</feature>
<feature type="helix" evidence="18">
    <location>
        <begin position="198"/>
        <end position="200"/>
    </location>
</feature>
<feature type="strand" evidence="18">
    <location>
        <begin position="202"/>
        <end position="205"/>
    </location>
</feature>
<feature type="helix" evidence="18">
    <location>
        <begin position="208"/>
        <end position="222"/>
    </location>
</feature>
<feature type="helix" evidence="18">
    <location>
        <begin position="225"/>
        <end position="228"/>
    </location>
</feature>
<feature type="helix" evidence="18">
    <location>
        <begin position="231"/>
        <end position="241"/>
    </location>
</feature>
<feature type="strand" evidence="18">
    <location>
        <begin position="245"/>
        <end position="247"/>
    </location>
</feature>
<feature type="helix" evidence="18">
    <location>
        <begin position="248"/>
        <end position="257"/>
    </location>
</feature>
<feature type="helix" evidence="18">
    <location>
        <begin position="259"/>
        <end position="261"/>
    </location>
</feature>
<feature type="strand" evidence="18">
    <location>
        <begin position="264"/>
        <end position="267"/>
    </location>
</feature>
<feature type="strand" evidence="18">
    <location>
        <begin position="269"/>
        <end position="271"/>
    </location>
</feature>
<feature type="strand" evidence="18">
    <location>
        <begin position="273"/>
        <end position="276"/>
    </location>
</feature>
<feature type="helix" evidence="18">
    <location>
        <begin position="278"/>
        <end position="283"/>
    </location>
</feature>
<feature type="helix" evidence="18">
    <location>
        <begin position="284"/>
        <end position="289"/>
    </location>
</feature>
<feature type="turn" evidence="18">
    <location>
        <begin position="290"/>
        <end position="292"/>
    </location>
</feature>
<feature type="helix" evidence="18">
    <location>
        <begin position="297"/>
        <end position="304"/>
    </location>
</feature>
<feature type="turn" evidence="16">
    <location>
        <begin position="305"/>
        <end position="307"/>
    </location>
</feature>
<feature type="strand" evidence="18">
    <location>
        <begin position="313"/>
        <end position="315"/>
    </location>
</feature>
<feature type="strand" evidence="18">
    <location>
        <begin position="318"/>
        <end position="323"/>
    </location>
</feature>
<feature type="helix" evidence="18">
    <location>
        <begin position="326"/>
        <end position="335"/>
    </location>
</feature>
<feature type="helix" evidence="18">
    <location>
        <begin position="339"/>
        <end position="345"/>
    </location>
</feature>
<feature type="strand" evidence="18">
    <location>
        <begin position="348"/>
        <end position="353"/>
    </location>
</feature>
<feature type="helix" evidence="18">
    <location>
        <begin position="354"/>
        <end position="356"/>
    </location>
</feature>
<feature type="turn" evidence="18">
    <location>
        <begin position="365"/>
        <end position="367"/>
    </location>
</feature>
<feature type="helix" evidence="18">
    <location>
        <begin position="371"/>
        <end position="382"/>
    </location>
</feature>
<feature type="helix" evidence="18">
    <location>
        <begin position="384"/>
        <end position="389"/>
    </location>
</feature>
<feature type="strand" evidence="18">
    <location>
        <begin position="391"/>
        <end position="394"/>
    </location>
</feature>
<feature type="turn" evidence="18">
    <location>
        <begin position="398"/>
        <end position="400"/>
    </location>
</feature>
<feature type="helix" evidence="18">
    <location>
        <begin position="401"/>
        <end position="412"/>
    </location>
</feature>
<feature type="turn" evidence="18">
    <location>
        <begin position="421"/>
        <end position="424"/>
    </location>
</feature>
<feature type="strand" evidence="17">
    <location>
        <begin position="426"/>
        <end position="428"/>
    </location>
</feature>
<name>CREN1_PYRCJ</name>
<keyword id="KW-0002">3D-structure</keyword>
<keyword id="KW-0067">ATP-binding</keyword>
<keyword id="KW-0963">Cytoplasm</keyword>
<keyword id="KW-0206">Cytoskeleton</keyword>
<keyword id="KW-0378">Hydrolase</keyword>
<keyword id="KW-0547">Nucleotide-binding</keyword>
<gene>
    <name evidence="6" type="primary">cren-1</name>
    <name evidence="12" type="ordered locus">Pcal_1635</name>
</gene>
<dbReference type="EC" id="3.6.4.-" evidence="1"/>
<dbReference type="EMBL" id="CP000561">
    <property type="protein sequence ID" value="ABO09052.1"/>
    <property type="molecule type" value="Genomic_DNA"/>
</dbReference>
<dbReference type="PDB" id="4BQL">
    <property type="method" value="X-ray"/>
    <property type="resolution" value="3.34 A"/>
    <property type="chains" value="A/B/C/D=1-432"/>
</dbReference>
<dbReference type="PDB" id="4CJ7">
    <property type="method" value="X-ray"/>
    <property type="resolution" value="3.20 A"/>
    <property type="chains" value="A/B=1-432"/>
</dbReference>
<dbReference type="PDB" id="5LY3">
    <property type="method" value="X-ray"/>
    <property type="resolution" value="1.60 A"/>
    <property type="chains" value="A=1-432"/>
</dbReference>
<dbReference type="PDB" id="5MW1">
    <property type="method" value="EM"/>
    <property type="resolution" value="3.80 A"/>
    <property type="chains" value="A/B/C/D/E/F=1-432"/>
</dbReference>
<dbReference type="PDBsum" id="4BQL"/>
<dbReference type="PDBsum" id="4CJ7"/>
<dbReference type="PDBsum" id="5LY3"/>
<dbReference type="PDBsum" id="5MW1"/>
<dbReference type="EMDB" id="EMD-4117"/>
<dbReference type="SMR" id="A3MWN5"/>
<dbReference type="STRING" id="410359.Pcal_1635"/>
<dbReference type="KEGG" id="pcl:Pcal_1635"/>
<dbReference type="eggNOG" id="arCOG05583">
    <property type="taxonomic scope" value="Archaea"/>
</dbReference>
<dbReference type="HOGENOM" id="CLU_627936_0_0_2"/>
<dbReference type="EvolutionaryTrace" id="A3MWN5"/>
<dbReference type="Proteomes" id="UP000001431">
    <property type="component" value="Chromosome"/>
</dbReference>
<dbReference type="GO" id="GO:0005737">
    <property type="term" value="C:cytoplasm"/>
    <property type="evidence" value="ECO:0007669"/>
    <property type="project" value="UniProtKB-KW"/>
</dbReference>
<dbReference type="GO" id="GO:0005856">
    <property type="term" value="C:cytoskeleton"/>
    <property type="evidence" value="ECO:0007669"/>
    <property type="project" value="UniProtKB-SubCell"/>
</dbReference>
<dbReference type="GO" id="GO:0005524">
    <property type="term" value="F:ATP binding"/>
    <property type="evidence" value="ECO:0007669"/>
    <property type="project" value="UniProtKB-KW"/>
</dbReference>
<dbReference type="GO" id="GO:0016787">
    <property type="term" value="F:hydrolase activity"/>
    <property type="evidence" value="ECO:0007669"/>
    <property type="project" value="UniProtKB-KW"/>
</dbReference>
<dbReference type="Gene3D" id="3.30.420.40">
    <property type="match status" value="1"/>
</dbReference>
<dbReference type="Gene3D" id="3.30.420.570">
    <property type="match status" value="1"/>
</dbReference>
<dbReference type="InterPro" id="IPR004000">
    <property type="entry name" value="Actin"/>
</dbReference>
<dbReference type="InterPro" id="IPR043129">
    <property type="entry name" value="ATPase_NBD"/>
</dbReference>
<dbReference type="PANTHER" id="PTHR11937">
    <property type="entry name" value="ACTIN"/>
    <property type="match status" value="1"/>
</dbReference>
<dbReference type="Pfam" id="PF00022">
    <property type="entry name" value="Actin"/>
    <property type="match status" value="1"/>
</dbReference>
<dbReference type="SMART" id="SM00268">
    <property type="entry name" value="ACTIN"/>
    <property type="match status" value="1"/>
</dbReference>
<dbReference type="SUPFAM" id="SSF53067">
    <property type="entry name" value="Actin-like ATPase domain"/>
    <property type="match status" value="1"/>
</dbReference>
<accession>A3MWN5</accession>
<protein>
    <recommendedName>
        <fullName evidence="6">Crenactin</fullName>
        <ecNumber evidence="1">3.6.4.-</ecNumber>
    </recommendedName>
    <alternativeName>
        <fullName evidence="6">Archaeal actin homolog</fullName>
    </alternativeName>
</protein>
<evidence type="ECO:0000269" key="1">
    <source>
    </source>
</evidence>
<evidence type="ECO:0000269" key="2">
    <source>
    </source>
</evidence>
<evidence type="ECO:0000269" key="3">
    <source>
    </source>
</evidence>
<evidence type="ECO:0000269" key="4">
    <source>
    </source>
</evidence>
<evidence type="ECO:0000269" key="5">
    <source>
    </source>
</evidence>
<evidence type="ECO:0000303" key="6">
    <source>
    </source>
</evidence>
<evidence type="ECO:0000305" key="7"/>
<evidence type="ECO:0000305" key="8">
    <source>
    </source>
</evidence>
<evidence type="ECO:0000305" key="9">
    <source>
    </source>
</evidence>
<evidence type="ECO:0000305" key="10">
    <source>
    </source>
</evidence>
<evidence type="ECO:0000305" key="11">
    <source>
    </source>
</evidence>
<evidence type="ECO:0000312" key="12">
    <source>
        <dbReference type="EMBL" id="ABO09052.1"/>
    </source>
</evidence>
<evidence type="ECO:0007744" key="13">
    <source>
        <dbReference type="PDB" id="4BQL"/>
    </source>
</evidence>
<evidence type="ECO:0007744" key="14">
    <source>
        <dbReference type="PDB" id="4CJ7"/>
    </source>
</evidence>
<evidence type="ECO:0007744" key="15">
    <source>
        <dbReference type="PDB" id="5LY3"/>
    </source>
</evidence>
<evidence type="ECO:0007829" key="16">
    <source>
        <dbReference type="PDB" id="4BQL"/>
    </source>
</evidence>
<evidence type="ECO:0007829" key="17">
    <source>
        <dbReference type="PDB" id="4CJ7"/>
    </source>
</evidence>
<evidence type="ECO:0007829" key="18">
    <source>
        <dbReference type="PDB" id="5LY3"/>
    </source>
</evidence>